<proteinExistence type="inferred from homology"/>
<accession>O26869</accession>
<organism>
    <name type="scientific">Methanothermobacter thermautotrophicus (strain ATCC 29096 / DSM 1053 / JCM 10044 / NBRC 100330 / Delta H)</name>
    <name type="common">Methanobacterium thermoautotrophicum</name>
    <dbReference type="NCBI Taxonomy" id="187420"/>
    <lineage>
        <taxon>Archaea</taxon>
        <taxon>Methanobacteriati</taxon>
        <taxon>Methanobacteriota</taxon>
        <taxon>Methanomada group</taxon>
        <taxon>Methanobacteria</taxon>
        <taxon>Methanobacteriales</taxon>
        <taxon>Methanobacteriaceae</taxon>
        <taxon>Methanothermobacter</taxon>
    </lineage>
</organism>
<dbReference type="EC" id="2.1.1.-" evidence="1"/>
<dbReference type="EMBL" id="AE000666">
    <property type="protein sequence ID" value="AAB85278.1"/>
    <property type="molecule type" value="Genomic_DNA"/>
</dbReference>
<dbReference type="PIR" id="F69203">
    <property type="entry name" value="F69203"/>
</dbReference>
<dbReference type="RefSeq" id="WP_010876413.1">
    <property type="nucleotide sequence ID" value="NC_000916.1"/>
</dbReference>
<dbReference type="SMR" id="O26869"/>
<dbReference type="FunCoup" id="O26869">
    <property type="interactions" value="84"/>
</dbReference>
<dbReference type="STRING" id="187420.MTH_775"/>
<dbReference type="PaxDb" id="187420-MTH_775"/>
<dbReference type="EnsemblBacteria" id="AAB85278">
    <property type="protein sequence ID" value="AAB85278"/>
    <property type="gene ID" value="MTH_775"/>
</dbReference>
<dbReference type="KEGG" id="mth:MTH_775"/>
<dbReference type="PATRIC" id="fig|187420.15.peg.763"/>
<dbReference type="HOGENOM" id="CLU_040013_3_2_2"/>
<dbReference type="InParanoid" id="O26869"/>
<dbReference type="UniPathway" id="UPA00051"/>
<dbReference type="Proteomes" id="UP000005223">
    <property type="component" value="Chromosome"/>
</dbReference>
<dbReference type="GO" id="GO:0003871">
    <property type="term" value="F:5-methyltetrahydropteroyltriglutamate-homocysteine S-methyltransferase activity"/>
    <property type="evidence" value="ECO:0007669"/>
    <property type="project" value="InterPro"/>
</dbReference>
<dbReference type="GO" id="GO:0008270">
    <property type="term" value="F:zinc ion binding"/>
    <property type="evidence" value="ECO:0007669"/>
    <property type="project" value="InterPro"/>
</dbReference>
<dbReference type="GO" id="GO:0009086">
    <property type="term" value="P:methionine biosynthetic process"/>
    <property type="evidence" value="ECO:0007669"/>
    <property type="project" value="UniProtKB-UniRule"/>
</dbReference>
<dbReference type="GO" id="GO:0032259">
    <property type="term" value="P:methylation"/>
    <property type="evidence" value="ECO:0007669"/>
    <property type="project" value="UniProtKB-KW"/>
</dbReference>
<dbReference type="CDD" id="cd03311">
    <property type="entry name" value="CIMS_C_terminal_like"/>
    <property type="match status" value="1"/>
</dbReference>
<dbReference type="Gene3D" id="3.20.20.210">
    <property type="match status" value="1"/>
</dbReference>
<dbReference type="HAMAP" id="MF_00288">
    <property type="entry name" value="MetE"/>
    <property type="match status" value="1"/>
</dbReference>
<dbReference type="InterPro" id="IPR002629">
    <property type="entry name" value="Met_Synth_C/arc"/>
</dbReference>
<dbReference type="InterPro" id="IPR022921">
    <property type="entry name" value="MetE_arc"/>
</dbReference>
<dbReference type="InterPro" id="IPR038071">
    <property type="entry name" value="UROD/MetE-like_sf"/>
</dbReference>
<dbReference type="NCBIfam" id="NF002119">
    <property type="entry name" value="PRK00957.1"/>
    <property type="match status" value="1"/>
</dbReference>
<dbReference type="PANTHER" id="PTHR30519">
    <property type="entry name" value="5-METHYLTETRAHYDROPTEROYLTRIGLUTAMATE--HOMOCYSTEINE METHYLTRANSFERASE"/>
    <property type="match status" value="1"/>
</dbReference>
<dbReference type="Pfam" id="PF01717">
    <property type="entry name" value="Meth_synt_2"/>
    <property type="match status" value="1"/>
</dbReference>
<dbReference type="SUPFAM" id="SSF51726">
    <property type="entry name" value="UROD/MetE-like"/>
    <property type="match status" value="1"/>
</dbReference>
<protein>
    <recommendedName>
        <fullName evidence="1">Methionine synthase</fullName>
        <ecNumber evidence="1">2.1.1.-</ecNumber>
    </recommendedName>
    <alternativeName>
        <fullName evidence="1">Homocysteine methyltransferase</fullName>
    </alternativeName>
    <alternativeName>
        <fullName evidence="1">Methylcobalamin:homocysteine methyltransferase</fullName>
    </alternativeName>
</protein>
<name>METE_METTH</name>
<sequence>MITTVVGSYPTEPRGPETLGERLLNFFGSYDRYRPAIEAAVRDQFRAGVDIISDGQVRGDMVGHFAAAIGGMKIEDGTSIIYSRITPPAGSIGAADLRYAYRILRGLTDDESRGVKGIITGPSTMIYASRIEGFYDPQKRDRAVMDMAGVLKIEAKHLQDAGAAMIQIDEPFLSTGIVDMKTAGRAIDHIAAGLDIEVSLHVCGDIRNVLSDLLRFKVDVLDLEFAGRPSNLEVLEEKWRGDKGVGFGCVDTTTERVESMEEIRNLIKRGADIVGEENLYIDPDCGMRKLPRKAAFSKLRNMVMAAGN</sequence>
<keyword id="KW-0028">Amino-acid biosynthesis</keyword>
<keyword id="KW-0479">Metal-binding</keyword>
<keyword id="KW-0486">Methionine biosynthesis</keyword>
<keyword id="KW-0489">Methyltransferase</keyword>
<keyword id="KW-1185">Reference proteome</keyword>
<keyword id="KW-0808">Transferase</keyword>
<keyword id="KW-0862">Zinc</keyword>
<gene>
    <name evidence="1" type="primary">metE</name>
    <name type="ordered locus">MTH_775</name>
</gene>
<reference key="1">
    <citation type="journal article" date="1997" name="J. Bacteriol.">
        <title>Complete genome sequence of Methanobacterium thermoautotrophicum deltaH: functional analysis and comparative genomics.</title>
        <authorList>
            <person name="Smith D.R."/>
            <person name="Doucette-Stamm L.A."/>
            <person name="Deloughery C."/>
            <person name="Lee H.-M."/>
            <person name="Dubois J."/>
            <person name="Aldredge T."/>
            <person name="Bashirzadeh R."/>
            <person name="Blakely D."/>
            <person name="Cook R."/>
            <person name="Gilbert K."/>
            <person name="Harrison D."/>
            <person name="Hoang L."/>
            <person name="Keagle P."/>
            <person name="Lumm W."/>
            <person name="Pothier B."/>
            <person name="Qiu D."/>
            <person name="Spadafora R."/>
            <person name="Vicare R."/>
            <person name="Wang Y."/>
            <person name="Wierzbowski J."/>
            <person name="Gibson R."/>
            <person name="Jiwani N."/>
            <person name="Caruso A."/>
            <person name="Bush D."/>
            <person name="Safer H."/>
            <person name="Patwell D."/>
            <person name="Prabhakar S."/>
            <person name="McDougall S."/>
            <person name="Shimer G."/>
            <person name="Goyal A."/>
            <person name="Pietrovski S."/>
            <person name="Church G.M."/>
            <person name="Daniels C.J."/>
            <person name="Mao J.-I."/>
            <person name="Rice P."/>
            <person name="Noelling J."/>
            <person name="Reeve J.N."/>
        </authorList>
    </citation>
    <scope>NUCLEOTIDE SEQUENCE [LARGE SCALE GENOMIC DNA]</scope>
    <source>
        <strain>ATCC 29096 / DSM 1053 / JCM 10044 / NBRC 100330 / Delta H</strain>
    </source>
</reference>
<evidence type="ECO:0000255" key="1">
    <source>
        <dbReference type="HAMAP-Rule" id="MF_00288"/>
    </source>
</evidence>
<evidence type="ECO:0000305" key="2"/>
<feature type="chain" id="PRO_0000098685" description="Methionine synthase">
    <location>
        <begin position="1"/>
        <end position="308"/>
    </location>
</feature>
<feature type="binding site" evidence="1">
    <location>
        <position position="201"/>
    </location>
    <ligand>
        <name>Zn(2+)</name>
        <dbReference type="ChEBI" id="CHEBI:29105"/>
        <note>catalytic</note>
    </ligand>
</feature>
<feature type="binding site" evidence="1">
    <location>
        <position position="203"/>
    </location>
    <ligand>
        <name>Zn(2+)</name>
        <dbReference type="ChEBI" id="CHEBI:29105"/>
        <note>catalytic</note>
    </ligand>
</feature>
<feature type="binding site" evidence="1">
    <location>
        <position position="224"/>
    </location>
    <ligand>
        <name>Zn(2+)</name>
        <dbReference type="ChEBI" id="CHEBI:29105"/>
        <note>catalytic</note>
    </ligand>
</feature>
<feature type="binding site" evidence="1">
    <location>
        <position position="285"/>
    </location>
    <ligand>
        <name>Zn(2+)</name>
        <dbReference type="ChEBI" id="CHEBI:29105"/>
        <note>catalytic</note>
    </ligand>
</feature>
<comment type="function">
    <text evidence="1">Catalyzes the transfer of a methyl group to L-homocysteine resulting in methionine formation. Can use methylcobalamin and methylcobinamide as methyl donors, but methylcobalamin is not considered to be the physiological substrate.</text>
</comment>
<comment type="cofactor">
    <cofactor evidence="1">
        <name>Zn(2+)</name>
        <dbReference type="ChEBI" id="CHEBI:29105"/>
    </cofactor>
    <text evidence="1">Binds 1 zinc ion per subunit.</text>
</comment>
<comment type="pathway">
    <text evidence="1">Amino-acid biosynthesis; L-methionine biosynthesis via de novo pathway.</text>
</comment>
<comment type="similarity">
    <text evidence="1 2">Belongs to the archaeal MetE family.</text>
</comment>